<evidence type="ECO:0000250" key="1">
    <source>
        <dbReference type="UniProtKB" id="A2SZS3"/>
    </source>
</evidence>
<evidence type="ECO:0000250" key="2">
    <source>
        <dbReference type="UniProtKB" id="I0DF35"/>
    </source>
</evidence>
<evidence type="ECO:0000250" key="3">
    <source>
        <dbReference type="UniProtKB" id="P23456"/>
    </source>
</evidence>
<evidence type="ECO:0000250" key="4">
    <source>
        <dbReference type="UniProtKB" id="Q89709"/>
    </source>
</evidence>
<evidence type="ECO:0000250" key="5">
    <source>
        <dbReference type="UniProtKB" id="Q9E005"/>
    </source>
</evidence>
<evidence type="ECO:0000250" key="6">
    <source>
        <dbReference type="UniProtKB" id="Q9YQR5"/>
    </source>
</evidence>
<evidence type="ECO:0000255" key="7">
    <source>
        <dbReference type="PROSITE-ProRule" id="PRU00539"/>
    </source>
</evidence>
<evidence type="ECO:0000269" key="8">
    <source>
    </source>
</evidence>
<evidence type="ECO:0000303" key="9">
    <source>
    </source>
</evidence>
<evidence type="ECO:0000305" key="10"/>
<reference key="1">
    <citation type="journal article" date="1991" name="Virus Res.">
        <title>Nucleotide sequence and coding capacity of the large (L) genomic RNA segment of Seoul 80-39 virus, a member of the hantavirus genus.</title>
        <authorList>
            <person name="Antic D."/>
            <person name="Lim B.U."/>
            <person name="Yong Kang C."/>
        </authorList>
    </citation>
    <scope>NUCLEOTIDE SEQUENCE [GENOMIC RNA]</scope>
</reference>
<reference key="2">
    <citation type="journal article" date="2005" name="Arch. Virol.">
        <title>L protein, the RNA-dependent RNA polymerase of hantaviruses.</title>
        <authorList>
            <person name="Kukkonen S.K."/>
            <person name="Vaheri A."/>
            <person name="Plyusnin A."/>
        </authorList>
    </citation>
    <scope>REVIEW</scope>
</reference>
<reference key="3">
    <citation type="journal article" date="2017" name="Crit. Rev. Microbiol.">
        <title>Bunyaviridae RdRps: structure, motifs, and RNA synthesis machinery.</title>
        <authorList>
            <person name="Amroun A."/>
            <person name="Priet S."/>
            <person name="de Lamballerie X."/>
            <person name="Querat G."/>
        </authorList>
    </citation>
    <scope>REVIEW</scope>
</reference>
<reference key="4">
    <citation type="journal article" date="2020" name="Trends Microbiol.">
        <title>The Cap-Snatching Mechanism of Bunyaviruses.</title>
        <authorList>
            <person name="Olschewski S."/>
            <person name="Cusack S."/>
            <person name="Rosenthal M."/>
        </authorList>
    </citation>
    <scope>REVIEW</scope>
</reference>
<protein>
    <recommendedName>
        <fullName>RNA-directed RNA polymerase L</fullName>
        <shortName>Protein L</shortName>
        <ecNumber>2.7.7.48</ecNumber>
    </recommendedName>
    <alternativeName>
        <fullName>Large structural protein</fullName>
    </alternativeName>
    <alternativeName>
        <fullName evidence="10">RdRp</fullName>
    </alternativeName>
    <alternativeName>
        <fullName>Replicase</fullName>
    </alternativeName>
    <alternativeName>
        <fullName>Transcriptase</fullName>
    </alternativeName>
    <domain>
        <recommendedName>
            <fullName>cap-snatching endonuclease</fullName>
            <ecNumber evidence="3">3.1.-.-</ecNumber>
        </recommendedName>
    </domain>
</protein>
<sequence>MEKYREIHRDLKEFTINSLTAVECMDYLDRLYAVRHDIVDQMIKHEWSDNKDSEEPISKVLLFAGIPNNVITALEKKVIPDHPSGKTLRSFFKMTPDNYRITGSLIEFVEVTVTADVDKGIREKKMKYELGLKYLEQELMTFFHRGELQNPYKITFKVVAVRTDGSNISTQWPSARNDGVVQYMRLVQAEISYVREHLVKTEERAALEAMFNLKFNISSLKTQPYFIPEYKGIDLIRPDIDGLVNYAQSWMSKTQEFSFFEVKGSAVFDCFNENEQGHIVKYPMSRHPRNFLLIQCTVLTAYKPATILSDQLDSRRACIQFLNLIPETPASILAHDMAHRYINLTRDDLLAYYAPRIQFNPTQNIKEPGTFKLTSNMMRPESKIMLDMLSQHEPRENLGKSIESLNISSHIVQSDCVSLITKILSDLELNISEPSSHEQITAKHTHVDTVLDKFFQNETQKYLIDILKKTTAWHIGHLVRDITESLIAHSGLRRSKYWSIHAYNNGSVILFILPSKSLEVAGSFVRFMTAFKLGPGLVDKDNLDSILADGDILWGVSKIMSLDLNRLLALNIAFEKALLATATWFQYYTEDQSQFPLQHSIRSVFAYHFLLAICQKMKLCAIFDNLRYLIPAVTSLYSGFPSLVEKLFERPFKSALEVYVYYNIKSLLVALAQNNKARFYSKVKLLGLTVDQSTVGASGIYPSFMSRVVYKHYKSLISEVTTCFFLFEKGLHGNVNEEAKIHLETVEWATKFKEKEDKYGEMLVEHGYTIGELVESSELAVQQLYCQDAVELAANELNRVLIAKSQVVANSILNKYWEEPYFSQTRNISLKGMSGQVQEDGHLSSSTTIIEAIRYLSNSRNNPNVLQLYEETRHQKAQARIVRKFQRTEADRGFFITTLPTRCRLEIIEDYYDAISKNVAEEYISYGGERKILCIQAALEKALRWASGESFIELSNGKFIRMKRKLMYVSADATKWSPGDNSAKFRRFTAALHNGLPDDRLKNCVIDALRHVYKTDFYMSRKLRHYIDSMDTYEPHVRDFLNFFPDGHHGEVRGNWLQGNLNKCSSLFGVAMSLLFKEIWTRLFPELDCFFEFAHHSDDALFIYGYLEPADDGTDWFLFVSQQIQAGKLHWFNVNTEMWKSMFNLHEHILLLGSIKISPKKTTLSPTNAEFLSTFFEGCAVSIPFIKILLGSLSDLPGLGYFDDLAAAQTRCVKAMDLGASPQISQLAVSLSTSKVERLYGTSIGMVNYPGTYLRTKHSETPIPLGGSGAMSIMELSTAGIGMSDKNLLKQALIGYMHKHQKQMSYILGLFKFLMDLSGETFQHERLGQFSFIGKVQWKIFTPKSEFEFSDMYSQKFLKVWSEQHPTYDYIIPKGRDNLLIYLVRKLNDPSIITAMTMQSPLQLRFRMQAKQHMKVCRLDGDWVTFREVLAAANSFAESYEPSQNDIDLFQTLTSCTFSKEYAWKDFLNNVHCDVIPTKQVQRAKVARTFTVREKDRIIQNSIPAVIGYKFAVTVDEMSDVLDTAKFPDSLAVDLKTMKDGVYRELGLDISSPDVMKKVAPMLYKSAKSRVVIVQGNVEGTAEAICAYWLRNMSLIKTIKVKPHKEVLQAVSIFNRKEDIGQQKDLSALKLCIEVWRWAKANNAPYRDWFHALWFEDKTFSEWLDRFIRVGVPPIDPEIQCAALMIADVKGDRSVLQLQANRRAYSGKQYDAYCVQTYNEETKLYEGDLRVTFNFGLDCARLEIFWDKKTYILETSITQKHVLKIMMEEVSKELVRCGMRFNTEQVNGVKHLVLFKTDSGFEWGKPNIPCIVYKNCALRTGLRTNQAINHKFMITIKDDGLRAIAQYDEDSPRFLLAHAFHTIRDVRYQAVDAVSNVWFTHKGIKLYLNPIISSGLLEYFMKNIPAAIPPAAYSLIMNRAKISVDLFMFNDLLRLINPGNTLDLSGLEITGEGYSTVNSLSSRLWSEEMSLVDDEEEMDDEFTIDLQDVDFENIDIEADVEHFLQDESAYTGDLLIMSEETEVKKMRGIIKLLEPVKLIKSWVSRGLSIEKVYNPVNIILMTRYISKNFNFSGKQVSLLDPYDLTELESIVKGWGESVVDQFDSLDLEAQNLVQKQGIVPEDVIPDSLFSFRHTMVLLRRLFGQDSVSTFY</sequence>
<feature type="chain" id="PRO_0000222024" description="RNA-directed RNA polymerase L">
    <location>
        <begin position="1"/>
        <end position="2151"/>
    </location>
</feature>
<feature type="domain" description="RdRp catalytic" evidence="7">
    <location>
        <begin position="956"/>
        <end position="1142"/>
    </location>
</feature>
<feature type="active site" description="For endonuclease activity" evidence="3">
    <location>
        <position position="124"/>
    </location>
</feature>
<feature type="binding site" evidence="5">
    <location>
        <position position="36"/>
    </location>
    <ligand>
        <name>Mn(2+)</name>
        <dbReference type="ChEBI" id="CHEBI:29035"/>
        <label>1</label>
    </ligand>
</feature>
<feature type="binding site" evidence="3">
    <location>
        <position position="54"/>
    </location>
    <ligand>
        <name>Mn(2+)</name>
        <dbReference type="ChEBI" id="CHEBI:29035"/>
        <label>2</label>
    </ligand>
</feature>
<feature type="binding site" evidence="5">
    <location>
        <position position="97"/>
    </location>
    <ligand>
        <name>Mn(2+)</name>
        <dbReference type="ChEBI" id="CHEBI:29035"/>
        <label>1</label>
    </ligand>
</feature>
<feature type="binding site" evidence="5">
    <location>
        <position position="97"/>
    </location>
    <ligand>
        <name>Mn(2+)</name>
        <dbReference type="ChEBI" id="CHEBI:29035"/>
        <label>2</label>
    </ligand>
</feature>
<feature type="binding site" evidence="5">
    <location>
        <position position="110"/>
    </location>
    <ligand>
        <name>Mn(2+)</name>
        <dbReference type="ChEBI" id="CHEBI:29035"/>
        <label>1</label>
    </ligand>
</feature>
<feature type="binding site" evidence="5">
    <location>
        <position position="111"/>
    </location>
    <ligand>
        <name>Mn(2+)</name>
        <dbReference type="ChEBI" id="CHEBI:29035"/>
        <label>1</label>
    </ligand>
</feature>
<feature type="binding site" evidence="2">
    <location>
        <position position="1099"/>
    </location>
    <ligand>
        <name>Mg(2+)</name>
        <dbReference type="ChEBI" id="CHEBI:18420"/>
        <note>catalytic; for RdRp activity</note>
    </ligand>
</feature>
<organismHost>
    <name type="scientific">Homo sapiens</name>
    <name type="common">Human</name>
    <dbReference type="NCBI Taxonomy" id="9606"/>
</organismHost>
<organismHost>
    <name type="scientific">Rattus norvegicus</name>
    <name type="common">Rat</name>
    <dbReference type="NCBI Taxonomy" id="10116"/>
</organismHost>
<organismHost>
    <name type="scientific">Rattus rattus</name>
    <name type="common">Black rat</name>
    <dbReference type="NCBI Taxonomy" id="10117"/>
</organismHost>
<name>L_SEOU8</name>
<organism>
    <name type="scientific">Seoul virus (strain 80-39)</name>
    <dbReference type="NCBI Taxonomy" id="12557"/>
    <lineage>
        <taxon>Viruses</taxon>
        <taxon>Riboviria</taxon>
        <taxon>Orthornavirae</taxon>
        <taxon>Negarnaviricota</taxon>
        <taxon>Polyploviricotina</taxon>
        <taxon>Ellioviricetes</taxon>
        <taxon>Bunyavirales</taxon>
        <taxon>Hantaviridae</taxon>
        <taxon>Mammantavirinae</taxon>
        <taxon>Orthohantavirus</taxon>
        <taxon>Orthohantavirus seoulense</taxon>
    </lineage>
</organism>
<keyword id="KW-1157">Cap snatching</keyword>
<keyword id="KW-0255">Endonuclease</keyword>
<keyword id="KW-1035">Host cytoplasm</keyword>
<keyword id="KW-0378">Hydrolase</keyword>
<keyword id="KW-0460">Magnesium</keyword>
<keyword id="KW-0464">Manganese</keyword>
<keyword id="KW-0479">Metal-binding</keyword>
<keyword id="KW-0540">Nuclease</keyword>
<keyword id="KW-0547">Nucleotide-binding</keyword>
<keyword id="KW-0548">Nucleotidyltransferase</keyword>
<keyword id="KW-0696">RNA-directed RNA polymerase</keyword>
<keyword id="KW-0808">Transferase</keyword>
<keyword id="KW-0693">Viral RNA replication</keyword>
<accession>P27314</accession>
<proteinExistence type="inferred from homology"/>
<dbReference type="EC" id="2.7.7.48"/>
<dbReference type="EC" id="3.1.-.-" evidence="3"/>
<dbReference type="EMBL" id="X56492">
    <property type="protein sequence ID" value="CAA39847.1"/>
    <property type="molecule type" value="Genomic_RNA"/>
</dbReference>
<dbReference type="PIR" id="S16449">
    <property type="entry name" value="S16449"/>
</dbReference>
<dbReference type="SMR" id="P27314"/>
<dbReference type="KEGG" id="vg:2656409"/>
<dbReference type="Proteomes" id="UP000207620">
    <property type="component" value="Genome"/>
</dbReference>
<dbReference type="GO" id="GO:0044220">
    <property type="term" value="C:host cell perinuclear region of cytoplasm"/>
    <property type="evidence" value="ECO:0007669"/>
    <property type="project" value="UniProtKB-SubCell"/>
</dbReference>
<dbReference type="GO" id="GO:0004519">
    <property type="term" value="F:endonuclease activity"/>
    <property type="evidence" value="ECO:0007669"/>
    <property type="project" value="UniProtKB-KW"/>
</dbReference>
<dbReference type="GO" id="GO:0046872">
    <property type="term" value="F:metal ion binding"/>
    <property type="evidence" value="ECO:0007669"/>
    <property type="project" value="UniProtKB-KW"/>
</dbReference>
<dbReference type="GO" id="GO:0000166">
    <property type="term" value="F:nucleotide binding"/>
    <property type="evidence" value="ECO:0007669"/>
    <property type="project" value="UniProtKB-KW"/>
</dbReference>
<dbReference type="GO" id="GO:0003968">
    <property type="term" value="F:RNA-directed RNA polymerase activity"/>
    <property type="evidence" value="ECO:0007669"/>
    <property type="project" value="UniProtKB-KW"/>
</dbReference>
<dbReference type="GO" id="GO:0075526">
    <property type="term" value="P:cap snatching"/>
    <property type="evidence" value="ECO:0007669"/>
    <property type="project" value="UniProtKB-KW"/>
</dbReference>
<dbReference type="GO" id="GO:0006351">
    <property type="term" value="P:DNA-templated transcription"/>
    <property type="evidence" value="ECO:0007669"/>
    <property type="project" value="InterPro"/>
</dbReference>
<dbReference type="GO" id="GO:0039689">
    <property type="term" value="P:negative stranded viral RNA replication"/>
    <property type="evidence" value="ECO:0000250"/>
    <property type="project" value="UniProtKB"/>
</dbReference>
<dbReference type="GO" id="GO:0039696">
    <property type="term" value="P:RNA-templated viral transcription"/>
    <property type="evidence" value="ECO:0000250"/>
    <property type="project" value="UniProtKB"/>
</dbReference>
<dbReference type="InterPro" id="IPR048006">
    <property type="entry name" value="CapSnatch_bunyavir"/>
</dbReference>
<dbReference type="InterPro" id="IPR054155">
    <property type="entry name" value="CapSnatchArena_N"/>
</dbReference>
<dbReference type="InterPro" id="IPR016268">
    <property type="entry name" value="RNA-dir_pol_hantavirus"/>
</dbReference>
<dbReference type="InterPro" id="IPR024378">
    <property type="entry name" value="RNA-dir_pol_N_hantavirus"/>
</dbReference>
<dbReference type="InterPro" id="IPR007099">
    <property type="entry name" value="RNA-dir_pol_NSvirus"/>
</dbReference>
<dbReference type="InterPro" id="IPR007322">
    <property type="entry name" value="RNA_pol_bunyavir"/>
</dbReference>
<dbReference type="NCBIfam" id="TIGR04202">
    <property type="entry name" value="capSnatchArena"/>
    <property type="match status" value="1"/>
</dbReference>
<dbReference type="Pfam" id="PF04196">
    <property type="entry name" value="Bunya_RdRp"/>
    <property type="match status" value="1"/>
</dbReference>
<dbReference type="Pfam" id="PF21991">
    <property type="entry name" value="capSnatchArena"/>
    <property type="match status" value="1"/>
</dbReference>
<dbReference type="Pfam" id="PF12426">
    <property type="entry name" value="DUF3674"/>
    <property type="match status" value="1"/>
</dbReference>
<dbReference type="PIRSF" id="PIRSF000825">
    <property type="entry name" value="L_HantaV"/>
    <property type="match status" value="1"/>
</dbReference>
<dbReference type="PROSITE" id="PS50525">
    <property type="entry name" value="RDRP_SSRNA_NEG_SEG"/>
    <property type="match status" value="1"/>
</dbReference>
<comment type="function">
    <text evidence="5">RNA-dependent RNA polymerase, which is responsible for the replication and transcription of the viral RNA genome using antigenomic RNA as an intermediate (By similarity). During transcription, synthesizes subgenomic RNAs and assures their capping by a cap-snatching mechanism, which involves the endonuclease activity cleaving the host capped pre-mRNAs. These short capped RNAs are then used as primers for viral transcription. Cleaves ssRNA substrates but not DNA (By similarity). Seems to downregulate the expression of its own and heterologous mRNAs through its endonuclease activity (By similarity).</text>
</comment>
<comment type="catalytic activity">
    <reaction evidence="7">
        <text>RNA(n) + a ribonucleoside 5'-triphosphate = RNA(n+1) + diphosphate</text>
        <dbReference type="Rhea" id="RHEA:21248"/>
        <dbReference type="Rhea" id="RHEA-COMP:14527"/>
        <dbReference type="Rhea" id="RHEA-COMP:17342"/>
        <dbReference type="ChEBI" id="CHEBI:33019"/>
        <dbReference type="ChEBI" id="CHEBI:61557"/>
        <dbReference type="ChEBI" id="CHEBI:140395"/>
        <dbReference type="EC" id="2.7.7.48"/>
    </reaction>
</comment>
<comment type="cofactor">
    <cofactor evidence="3">
        <name>Mn(2+)</name>
        <dbReference type="ChEBI" id="CHEBI:29035"/>
    </cofactor>
    <text evidence="3 8">For endonuclease activity. Binds 2 Mn(2+) ions in the active site. The divalent metal ions are crucial for catalytic activity (PubMed:31948728).</text>
</comment>
<comment type="cofactor">
    <cofactor evidence="1">
        <name>Mg(2+)</name>
        <dbReference type="ChEBI" id="CHEBI:18420"/>
    </cofactor>
    <cofactor evidence="1">
        <name>Mn(2+)</name>
        <dbReference type="ChEBI" id="CHEBI:29035"/>
    </cofactor>
    <text evidence="1">For polymerase activity.</text>
</comment>
<comment type="subunit">
    <text evidence="4">Interacts with the viral nucleoprotein.</text>
</comment>
<comment type="subcellular location">
    <subcellularLocation>
        <location evidence="6">Host cytoplasm</location>
        <location evidence="6">Host perinuclear region</location>
    </subcellularLocation>
</comment>
<comment type="domain">
    <text evidence="1 2 5">The N-terminus contains the endonuclease activity (endoN) (By similarity). The central region contains the RdRp activity (By similarity). The C-terminus contains the cap-binding region (By similarity).</text>
</comment>
<comment type="miscellaneous">
    <text evidence="9">Classified as His(+) endonuclease since it has a histidine upstream of the active site that coordinates the first cation.</text>
</comment>
<comment type="similarity">
    <text evidence="10">Belongs to the Bunyavirales RNA polymerase family.</text>
</comment>
<gene>
    <name type="primary">L</name>
</gene>